<proteinExistence type="evidence at protein level"/>
<feature type="chain" id="PRO_0000415714" description="Isovalerate--CoA ligase AAE2">
    <location>
        <begin position="1"/>
        <end position="603"/>
    </location>
</feature>
<organism>
    <name type="scientific">Arabidopsis thaliana</name>
    <name type="common">Mouse-ear cress</name>
    <dbReference type="NCBI Taxonomy" id="3702"/>
    <lineage>
        <taxon>Eukaryota</taxon>
        <taxon>Viridiplantae</taxon>
        <taxon>Streptophyta</taxon>
        <taxon>Embryophyta</taxon>
        <taxon>Tracheophyta</taxon>
        <taxon>Spermatophyta</taxon>
        <taxon>Magnoliopsida</taxon>
        <taxon>eudicotyledons</taxon>
        <taxon>Gunneridae</taxon>
        <taxon>Pentapetalae</taxon>
        <taxon>rosids</taxon>
        <taxon>malvids</taxon>
        <taxon>Brassicales</taxon>
        <taxon>Brassicaceae</taxon>
        <taxon>Camelineae</taxon>
        <taxon>Arabidopsis</taxon>
    </lineage>
</organism>
<comment type="function">
    <text evidence="2">Catalyzes the ligation of CoA on isovalerate to produce 3-methylbutanoyl-CoA (PubMed:23300257). Can also use butanoate, pentanoate, hexanoate, 3-methylpentanoate and 4-methylpentanoate as substrates with a lower efficiency (PubMed:23300257).</text>
</comment>
<comment type="catalytic activity">
    <reaction evidence="2">
        <text>3-methylbutanoate + ATP + CoA = 3-methylbutanoyl-CoA + AMP + diphosphate</text>
        <dbReference type="Rhea" id="RHEA:46184"/>
        <dbReference type="ChEBI" id="CHEBI:30616"/>
        <dbReference type="ChEBI" id="CHEBI:33019"/>
        <dbReference type="ChEBI" id="CHEBI:48942"/>
        <dbReference type="ChEBI" id="CHEBI:57287"/>
        <dbReference type="ChEBI" id="CHEBI:57345"/>
        <dbReference type="ChEBI" id="CHEBI:456215"/>
    </reaction>
    <physiologicalReaction direction="left-to-right" evidence="2">
        <dbReference type="Rhea" id="RHEA:46185"/>
    </physiologicalReaction>
</comment>
<comment type="catalytic activity">
    <reaction evidence="2">
        <text>hexanoate + ATP + CoA = hexanoyl-CoA + AMP + diphosphate</text>
        <dbReference type="Rhea" id="RHEA:43740"/>
        <dbReference type="ChEBI" id="CHEBI:17120"/>
        <dbReference type="ChEBI" id="CHEBI:30616"/>
        <dbReference type="ChEBI" id="CHEBI:33019"/>
        <dbReference type="ChEBI" id="CHEBI:57287"/>
        <dbReference type="ChEBI" id="CHEBI:62620"/>
        <dbReference type="ChEBI" id="CHEBI:456215"/>
    </reaction>
    <physiologicalReaction direction="left-to-right" evidence="2">
        <dbReference type="Rhea" id="RHEA:43741"/>
    </physiologicalReaction>
</comment>
<comment type="catalytic activity">
    <reaction evidence="2">
        <text>butanoate + ATP + CoA = butanoyl-CoA + AMP + diphosphate</text>
        <dbReference type="Rhea" id="RHEA:46172"/>
        <dbReference type="ChEBI" id="CHEBI:17968"/>
        <dbReference type="ChEBI" id="CHEBI:30616"/>
        <dbReference type="ChEBI" id="CHEBI:33019"/>
        <dbReference type="ChEBI" id="CHEBI:57287"/>
        <dbReference type="ChEBI" id="CHEBI:57371"/>
        <dbReference type="ChEBI" id="CHEBI:456215"/>
    </reaction>
    <physiologicalReaction direction="left-to-right" evidence="2">
        <dbReference type="Rhea" id="RHEA:46173"/>
    </physiologicalReaction>
</comment>
<comment type="catalytic activity">
    <reaction evidence="2">
        <text>pentanoate + ATP + CoA = pentanoyl-CoA + AMP + diphosphate</text>
        <dbReference type="Rhea" id="RHEA:46168"/>
        <dbReference type="ChEBI" id="CHEBI:30616"/>
        <dbReference type="ChEBI" id="CHEBI:31011"/>
        <dbReference type="ChEBI" id="CHEBI:33019"/>
        <dbReference type="ChEBI" id="CHEBI:57287"/>
        <dbReference type="ChEBI" id="CHEBI:57389"/>
        <dbReference type="ChEBI" id="CHEBI:456215"/>
    </reaction>
    <physiologicalReaction direction="left-to-right" evidence="2">
        <dbReference type="Rhea" id="RHEA:46169"/>
    </physiologicalReaction>
</comment>
<comment type="catalytic activity">
    <reaction evidence="2">
        <text>3-methylpentanoate + ATP + CoA = 3-methylpentanoyl-CoA + AMP + diphosphate</text>
        <dbReference type="Rhea" id="RHEA:66992"/>
        <dbReference type="ChEBI" id="CHEBI:30616"/>
        <dbReference type="ChEBI" id="CHEBI:33019"/>
        <dbReference type="ChEBI" id="CHEBI:57287"/>
        <dbReference type="ChEBI" id="CHEBI:167610"/>
        <dbReference type="ChEBI" id="CHEBI:167613"/>
        <dbReference type="ChEBI" id="CHEBI:456215"/>
    </reaction>
    <physiologicalReaction direction="left-to-right" evidence="2">
        <dbReference type="Rhea" id="RHEA:66993"/>
    </physiologicalReaction>
</comment>
<comment type="catalytic activity">
    <reaction evidence="2">
        <text>4-methylpentanoate + ATP + CoA = 4-methylpentanoyl-CoA + AMP + diphosphate</text>
        <dbReference type="Rhea" id="RHEA:66988"/>
        <dbReference type="ChEBI" id="CHEBI:30616"/>
        <dbReference type="ChEBI" id="CHEBI:33019"/>
        <dbReference type="ChEBI" id="CHEBI:57287"/>
        <dbReference type="ChEBI" id="CHEBI:74904"/>
        <dbReference type="ChEBI" id="CHEBI:131445"/>
        <dbReference type="ChEBI" id="CHEBI:456215"/>
    </reaction>
    <physiologicalReaction direction="left-to-right" evidence="2">
        <dbReference type="Rhea" id="RHEA:66989"/>
    </physiologicalReaction>
</comment>
<comment type="tissue specificity">
    <text evidence="1">Expressed at low levels in leaves, flowers and developing seeds.</text>
</comment>
<comment type="similarity">
    <text evidence="6">Belongs to the ATP-dependent AMP-binding enzyme family.</text>
</comment>
<keyword id="KW-0276">Fatty acid metabolism</keyword>
<keyword id="KW-0436">Ligase</keyword>
<keyword id="KW-0443">Lipid metabolism</keyword>
<keyword id="KW-1185">Reference proteome</keyword>
<name>AAE2_ARATH</name>
<protein>
    <recommendedName>
        <fullName evidence="5">Isovalerate--CoA ligase AAE2</fullName>
        <ecNumber evidence="2">6.2.1.-</ecNumber>
    </recommendedName>
    <alternativeName>
        <fullName evidence="7">3-methylpentanoate--CoA ligase AAE2</fullName>
        <ecNumber evidence="2">6.2.1.-</ecNumber>
    </alternativeName>
    <alternativeName>
        <fullName evidence="7">4-methylpentanoate--CoA ligase AAE2</fullName>
        <ecNumber evidence="2">6.2.1.-</ecNumber>
    </alternativeName>
    <alternativeName>
        <fullName evidence="3">AMP-binding protein 2</fullName>
        <shortName evidence="3">AtAMPBP2</shortName>
    </alternativeName>
    <alternativeName>
        <fullName evidence="4">Acyl-activating enzyme 2</fullName>
    </alternativeName>
    <alternativeName>
        <fullName evidence="7">Butanoate--CoA ligase AAE2</fullName>
        <ecNumber evidence="2">6.2.1.-</ecNumber>
    </alternativeName>
    <alternativeName>
        <fullName evidence="7">Hexanoate--CoA ligase AAE2</fullName>
        <ecNumber evidence="2">6.2.1.-</ecNumber>
    </alternativeName>
    <alternativeName>
        <fullName evidence="7">Pentanoate--CoA ligase AAE2</fullName>
        <ecNumber evidence="2">6.2.1.-</ecNumber>
    </alternativeName>
</protein>
<reference key="1">
    <citation type="journal article" date="2002" name="Plant Physiol.">
        <title>Arabidopsis contains nine long-chain acyl-coenzyme A synthetase genes that participate in fatty acid and glycerolipid metabolism.</title>
        <authorList>
            <person name="Shockey J.M."/>
            <person name="Fulda M.S."/>
            <person name="Browse J.A."/>
        </authorList>
    </citation>
    <scope>NUCLEOTIDE SEQUENCE [MRNA]</scope>
</reference>
<reference key="2">
    <citation type="journal article" date="1999" name="Nature">
        <title>Sequence and analysis of chromosome 2 of the plant Arabidopsis thaliana.</title>
        <authorList>
            <person name="Lin X."/>
            <person name="Kaul S."/>
            <person name="Rounsley S.D."/>
            <person name="Shea T.P."/>
            <person name="Benito M.-I."/>
            <person name="Town C.D."/>
            <person name="Fujii C.Y."/>
            <person name="Mason T.M."/>
            <person name="Bowman C.L."/>
            <person name="Barnstead M.E."/>
            <person name="Feldblyum T.V."/>
            <person name="Buell C.R."/>
            <person name="Ketchum K.A."/>
            <person name="Lee J.J."/>
            <person name="Ronning C.M."/>
            <person name="Koo H.L."/>
            <person name="Moffat K.S."/>
            <person name="Cronin L.A."/>
            <person name="Shen M."/>
            <person name="Pai G."/>
            <person name="Van Aken S."/>
            <person name="Umayam L."/>
            <person name="Tallon L.J."/>
            <person name="Gill J.E."/>
            <person name="Adams M.D."/>
            <person name="Carrera A.J."/>
            <person name="Creasy T.H."/>
            <person name="Goodman H.M."/>
            <person name="Somerville C.R."/>
            <person name="Copenhaver G.P."/>
            <person name="Preuss D."/>
            <person name="Nierman W.C."/>
            <person name="White O."/>
            <person name="Eisen J.A."/>
            <person name="Salzberg S.L."/>
            <person name="Fraser C.M."/>
            <person name="Venter J.C."/>
        </authorList>
    </citation>
    <scope>NUCLEOTIDE SEQUENCE [LARGE SCALE GENOMIC DNA]</scope>
    <source>
        <strain>cv. Columbia</strain>
    </source>
</reference>
<reference key="3">
    <citation type="journal article" date="2017" name="Plant J.">
        <title>Araport11: a complete reannotation of the Arabidopsis thaliana reference genome.</title>
        <authorList>
            <person name="Cheng C.Y."/>
            <person name="Krishnakumar V."/>
            <person name="Chan A.P."/>
            <person name="Thibaud-Nissen F."/>
            <person name="Schobel S."/>
            <person name="Town C.D."/>
        </authorList>
    </citation>
    <scope>GENOME REANNOTATION</scope>
    <source>
        <strain>cv. Columbia</strain>
    </source>
</reference>
<reference key="4">
    <citation type="journal article" date="2002" name="Science">
        <title>Functional annotation of a full-length Arabidopsis cDNA collection.</title>
        <authorList>
            <person name="Seki M."/>
            <person name="Narusaka M."/>
            <person name="Kamiya A."/>
            <person name="Ishida J."/>
            <person name="Satou M."/>
            <person name="Sakurai T."/>
            <person name="Nakajima M."/>
            <person name="Enju A."/>
            <person name="Akiyama K."/>
            <person name="Oono Y."/>
            <person name="Muramatsu M."/>
            <person name="Hayashizaki Y."/>
            <person name="Kawai J."/>
            <person name="Carninci P."/>
            <person name="Itoh M."/>
            <person name="Ishii Y."/>
            <person name="Arakawa T."/>
            <person name="Shibata K."/>
            <person name="Shinagawa A."/>
            <person name="Shinozaki K."/>
        </authorList>
    </citation>
    <scope>NUCLEOTIDE SEQUENCE [LARGE SCALE MRNA]</scope>
    <source>
        <strain>cv. Columbia</strain>
    </source>
</reference>
<reference key="5">
    <citation type="journal article" date="2003" name="Science">
        <title>Empirical analysis of transcriptional activity in the Arabidopsis genome.</title>
        <authorList>
            <person name="Yamada K."/>
            <person name="Lim J."/>
            <person name="Dale J.M."/>
            <person name="Chen H."/>
            <person name="Shinn P."/>
            <person name="Palm C.J."/>
            <person name="Southwick A.M."/>
            <person name="Wu H.C."/>
            <person name="Kim C.J."/>
            <person name="Nguyen M."/>
            <person name="Pham P.K."/>
            <person name="Cheuk R.F."/>
            <person name="Karlin-Newmann G."/>
            <person name="Liu S.X."/>
            <person name="Lam B."/>
            <person name="Sakano H."/>
            <person name="Wu T."/>
            <person name="Yu G."/>
            <person name="Miranda M."/>
            <person name="Quach H.L."/>
            <person name="Tripp M."/>
            <person name="Chang C.H."/>
            <person name="Lee J.M."/>
            <person name="Toriumi M.J."/>
            <person name="Chan M.M."/>
            <person name="Tang C.C."/>
            <person name="Onodera C.S."/>
            <person name="Deng J.M."/>
            <person name="Akiyama K."/>
            <person name="Ansari Y."/>
            <person name="Arakawa T."/>
            <person name="Banh J."/>
            <person name="Banno F."/>
            <person name="Bowser L."/>
            <person name="Brooks S.Y."/>
            <person name="Carninci P."/>
            <person name="Chao Q."/>
            <person name="Choy N."/>
            <person name="Enju A."/>
            <person name="Goldsmith A.D."/>
            <person name="Gurjal M."/>
            <person name="Hansen N.F."/>
            <person name="Hayashizaki Y."/>
            <person name="Johnson-Hopson C."/>
            <person name="Hsuan V.W."/>
            <person name="Iida K."/>
            <person name="Karnes M."/>
            <person name="Khan S."/>
            <person name="Koesema E."/>
            <person name="Ishida J."/>
            <person name="Jiang P.X."/>
            <person name="Jones T."/>
            <person name="Kawai J."/>
            <person name="Kamiya A."/>
            <person name="Meyers C."/>
            <person name="Nakajima M."/>
            <person name="Narusaka M."/>
            <person name="Seki M."/>
            <person name="Sakurai T."/>
            <person name="Satou M."/>
            <person name="Tamse R."/>
            <person name="Vaysberg M."/>
            <person name="Wallender E.K."/>
            <person name="Wong C."/>
            <person name="Yamamura Y."/>
            <person name="Yuan S."/>
            <person name="Shinozaki K."/>
            <person name="Davis R.W."/>
            <person name="Theologis A."/>
            <person name="Ecker J.R."/>
        </authorList>
    </citation>
    <scope>NUCLEOTIDE SEQUENCE [LARGE SCALE MRNA]</scope>
    <source>
        <strain>cv. Columbia</strain>
    </source>
</reference>
<reference key="6">
    <citation type="journal article" date="2003" name="Plant Physiol.">
        <title>Arabidopsis contains a large superfamily of acyl-activating enzymes. Phylogenetic and biochemical analysis reveals a new class of acyl-coenzyme a synthetases.</title>
        <authorList>
            <person name="Shockey J.M."/>
            <person name="Fulda M.S."/>
            <person name="Browse J."/>
        </authorList>
    </citation>
    <scope>TISSUE SPECIFICITY</scope>
    <scope>GENE FAMILY</scope>
    <scope>NOMENCLATURE</scope>
</reference>
<reference key="7">
    <citation type="journal article" date="2013" name="Mol. Plant">
        <title>Characterization of the formation of branched short-chain fatty acid:CoAs for bitter acid biosynthesis in hop glandular trichomes.</title>
        <authorList>
            <person name="Xu H."/>
            <person name="Zhang F."/>
            <person name="Liu B."/>
            <person name="Huhman D.V."/>
            <person name="Sumner L.W."/>
            <person name="Dixon R.A."/>
            <person name="Wang G."/>
        </authorList>
    </citation>
    <scope>FUNCTION</scope>
    <scope>CATALYTIC ACTIVITY</scope>
</reference>
<accession>Q9SEY5</accession>
<gene>
    <name evidence="4" type="primary">AAE2</name>
    <name evidence="3" type="synonym">AMPBP2</name>
    <name evidence="8" type="ordered locus">At2g17650</name>
    <name evidence="9" type="ORF">T17A5.12</name>
</gene>
<evidence type="ECO:0000269" key="1">
    <source>
    </source>
</evidence>
<evidence type="ECO:0000269" key="2">
    <source>
    </source>
</evidence>
<evidence type="ECO:0000303" key="3">
    <source>
    </source>
</evidence>
<evidence type="ECO:0000303" key="4">
    <source>
    </source>
</evidence>
<evidence type="ECO:0000303" key="5">
    <source>
    </source>
</evidence>
<evidence type="ECO:0000305" key="6"/>
<evidence type="ECO:0000305" key="7">
    <source>
    </source>
</evidence>
<evidence type="ECO:0000312" key="8">
    <source>
        <dbReference type="Araport" id="AT2G17650"/>
    </source>
</evidence>
<evidence type="ECO:0000312" key="9">
    <source>
        <dbReference type="EMBL" id="AAM15484.1"/>
    </source>
</evidence>
<dbReference type="EC" id="6.2.1.-" evidence="2"/>
<dbReference type="EMBL" id="AF503761">
    <property type="protein sequence ID" value="AAM28619.1"/>
    <property type="molecule type" value="mRNA"/>
</dbReference>
<dbReference type="EMBL" id="AC007509">
    <property type="protein sequence ID" value="AAM15484.1"/>
    <property type="molecule type" value="Genomic_DNA"/>
</dbReference>
<dbReference type="EMBL" id="CP002685">
    <property type="protein sequence ID" value="AEC06661.1"/>
    <property type="molecule type" value="Genomic_DNA"/>
</dbReference>
<dbReference type="EMBL" id="AK118689">
    <property type="protein sequence ID" value="BAC43283.1"/>
    <property type="molecule type" value="mRNA"/>
</dbReference>
<dbReference type="EMBL" id="BT005926">
    <property type="protein sequence ID" value="AAO64861.1"/>
    <property type="molecule type" value="mRNA"/>
</dbReference>
<dbReference type="PIR" id="G84554">
    <property type="entry name" value="G84554"/>
</dbReference>
<dbReference type="PIR" id="T08866">
    <property type="entry name" value="T08866"/>
</dbReference>
<dbReference type="RefSeq" id="NP_179356.1">
    <property type="nucleotide sequence ID" value="NM_127319.4"/>
</dbReference>
<dbReference type="SMR" id="Q9SEY5"/>
<dbReference type="FunCoup" id="Q9SEY5">
    <property type="interactions" value="177"/>
</dbReference>
<dbReference type="STRING" id="3702.Q9SEY5"/>
<dbReference type="iPTMnet" id="Q9SEY5"/>
<dbReference type="PaxDb" id="3702-AT2G17650.1"/>
<dbReference type="ProteomicsDB" id="244389"/>
<dbReference type="EnsemblPlants" id="AT2G17650.1">
    <property type="protein sequence ID" value="AT2G17650.1"/>
    <property type="gene ID" value="AT2G17650"/>
</dbReference>
<dbReference type="GeneID" id="816272"/>
<dbReference type="Gramene" id="AT2G17650.1">
    <property type="protein sequence ID" value="AT2G17650.1"/>
    <property type="gene ID" value="AT2G17650"/>
</dbReference>
<dbReference type="KEGG" id="ath:AT2G17650"/>
<dbReference type="Araport" id="AT2G17650"/>
<dbReference type="TAIR" id="AT2G17650"/>
<dbReference type="eggNOG" id="KOG1176">
    <property type="taxonomic scope" value="Eukaryota"/>
</dbReference>
<dbReference type="HOGENOM" id="CLU_000022_59_5_1"/>
<dbReference type="InParanoid" id="Q9SEY5"/>
<dbReference type="OMA" id="MFIAMQN"/>
<dbReference type="PhylomeDB" id="Q9SEY5"/>
<dbReference type="BioCyc" id="ARA:AT2G17650-MONOMER"/>
<dbReference type="PRO" id="PR:Q9SEY5"/>
<dbReference type="Proteomes" id="UP000006548">
    <property type="component" value="Chromosome 2"/>
</dbReference>
<dbReference type="ExpressionAtlas" id="Q9SEY5">
    <property type="expression patterns" value="baseline and differential"/>
</dbReference>
<dbReference type="GO" id="GO:0016874">
    <property type="term" value="F:ligase activity"/>
    <property type="evidence" value="ECO:0007669"/>
    <property type="project" value="UniProtKB-KW"/>
</dbReference>
<dbReference type="GO" id="GO:0006631">
    <property type="term" value="P:fatty acid metabolic process"/>
    <property type="evidence" value="ECO:0007669"/>
    <property type="project" value="UniProtKB-KW"/>
</dbReference>
<dbReference type="CDD" id="cd12118">
    <property type="entry name" value="ttLC_FACS_AEE21_like"/>
    <property type="match status" value="1"/>
</dbReference>
<dbReference type="FunFam" id="3.30.300.30:FF:000008">
    <property type="entry name" value="2,3-dihydroxybenzoate-AMP ligase"/>
    <property type="match status" value="1"/>
</dbReference>
<dbReference type="Gene3D" id="3.30.300.30">
    <property type="match status" value="1"/>
</dbReference>
<dbReference type="Gene3D" id="3.40.50.12780">
    <property type="entry name" value="N-terminal domain of ligase-like"/>
    <property type="match status" value="1"/>
</dbReference>
<dbReference type="InterPro" id="IPR025110">
    <property type="entry name" value="AMP-bd_C"/>
</dbReference>
<dbReference type="InterPro" id="IPR045851">
    <property type="entry name" value="AMP-bd_C_sf"/>
</dbReference>
<dbReference type="InterPro" id="IPR020845">
    <property type="entry name" value="AMP-binding_CS"/>
</dbReference>
<dbReference type="InterPro" id="IPR000873">
    <property type="entry name" value="AMP-dep_synth/lig_dom"/>
</dbReference>
<dbReference type="InterPro" id="IPR042099">
    <property type="entry name" value="ANL_N_sf"/>
</dbReference>
<dbReference type="NCBIfam" id="NF006020">
    <property type="entry name" value="PRK08162.1"/>
    <property type="match status" value="1"/>
</dbReference>
<dbReference type="PANTHER" id="PTHR43859">
    <property type="entry name" value="ACYL-ACTIVATING ENZYME"/>
    <property type="match status" value="1"/>
</dbReference>
<dbReference type="PANTHER" id="PTHR43859:SF5">
    <property type="entry name" value="ISOVALERATE--COA LIGASE AAE2"/>
    <property type="match status" value="1"/>
</dbReference>
<dbReference type="Pfam" id="PF00501">
    <property type="entry name" value="AMP-binding"/>
    <property type="match status" value="1"/>
</dbReference>
<dbReference type="Pfam" id="PF13193">
    <property type="entry name" value="AMP-binding_C"/>
    <property type="match status" value="1"/>
</dbReference>
<dbReference type="SUPFAM" id="SSF56801">
    <property type="entry name" value="Acetyl-CoA synthetase-like"/>
    <property type="match status" value="1"/>
</dbReference>
<dbReference type="PROSITE" id="PS00455">
    <property type="entry name" value="AMP_BINDING"/>
    <property type="match status" value="1"/>
</dbReference>
<sequence>MRFLLTKRAFRIFNPRFQRLWLTSSPFSSTSNSGGFPDDSEPESWRTIEGLLRSPANFSPLSPITFLERSAKVYRDRTSLVFGSVKHTWFQTYQRCLRLASALTNLGISRGDVVAALAPNVPAMHELHFAVPMAGLILCPLNTRLDPSTLSVLLAHSEAKILFVDHQLLEIAHGALDLLAKSDKTRKSLKLVLISQSNDDDDSDEDSSSTFASKYSFDYEYETLLKSGDSEFEIIKPRCEWDPISINYTSGTTSRPKGVVYSHRGAYLNSLATVFLHQMSVYPVYLWTVPMFHCNGWCLVWGVAAQGGTNICLRKVSPKMIFKNIAMHKVTHMGGAPTVLNMIVNYTVTEHKPLPHRVEIMTGGSPPLPQILAKMEELGFNVSHLYGLTETYGPGTHCVWKPEWDSLSLEERTKLKARQGVQHLGLEGLDVKDPLTMETVPDDGLTMGEVMFRGNTVMSGYFKDIEATRKAFEGDWFHSGDLAVKYPDGYIEIKDRLKDVIISGGENISSVEVERVLCSHQAVLEAAVVARPDHHWGQTPCGFVKLKEGFDTIKPEEIIGFCRDHLPHYMAPKTIVFGDIPKTSTGKVQKYLLRKKADEMGSL</sequence>